<protein>
    <recommendedName>
        <fullName evidence="1">Probable ECA polymerase</fullName>
    </recommendedName>
</protein>
<keyword id="KW-0997">Cell inner membrane</keyword>
<keyword id="KW-1003">Cell membrane</keyword>
<keyword id="KW-0472">Membrane</keyword>
<keyword id="KW-0812">Transmembrane</keyword>
<keyword id="KW-1133">Transmembrane helix</keyword>
<dbReference type="EMBL" id="CP000036">
    <property type="protein sequence ID" value="ABB68268.1"/>
    <property type="molecule type" value="Genomic_DNA"/>
</dbReference>
<dbReference type="RefSeq" id="WP_000055128.1">
    <property type="nucleotide sequence ID" value="NC_007613.1"/>
</dbReference>
<dbReference type="KEGG" id="sbo:SBO_3805"/>
<dbReference type="HOGENOM" id="CLU_049711_0_0_6"/>
<dbReference type="UniPathway" id="UPA00566"/>
<dbReference type="Proteomes" id="UP000007067">
    <property type="component" value="Chromosome"/>
</dbReference>
<dbReference type="GO" id="GO:0005886">
    <property type="term" value="C:plasma membrane"/>
    <property type="evidence" value="ECO:0007669"/>
    <property type="project" value="UniProtKB-SubCell"/>
</dbReference>
<dbReference type="GO" id="GO:0009246">
    <property type="term" value="P:enterobacterial common antigen biosynthetic process"/>
    <property type="evidence" value="ECO:0007669"/>
    <property type="project" value="UniProtKB-UniRule"/>
</dbReference>
<dbReference type="HAMAP" id="MF_01003">
    <property type="entry name" value="WzyE"/>
    <property type="match status" value="1"/>
</dbReference>
<dbReference type="InterPro" id="IPR010691">
    <property type="entry name" value="WzyE"/>
</dbReference>
<dbReference type="NCBIfam" id="NF002820">
    <property type="entry name" value="PRK02975.1"/>
    <property type="match status" value="1"/>
</dbReference>
<dbReference type="Pfam" id="PF06899">
    <property type="entry name" value="WzyE"/>
    <property type="match status" value="1"/>
</dbReference>
<reference key="1">
    <citation type="journal article" date="2005" name="Nucleic Acids Res.">
        <title>Genome dynamics and diversity of Shigella species, the etiologic agents of bacillary dysentery.</title>
        <authorList>
            <person name="Yang F."/>
            <person name="Yang J."/>
            <person name="Zhang X."/>
            <person name="Chen L."/>
            <person name="Jiang Y."/>
            <person name="Yan Y."/>
            <person name="Tang X."/>
            <person name="Wang J."/>
            <person name="Xiong Z."/>
            <person name="Dong J."/>
            <person name="Xue Y."/>
            <person name="Zhu Y."/>
            <person name="Xu X."/>
            <person name="Sun L."/>
            <person name="Chen S."/>
            <person name="Nie H."/>
            <person name="Peng J."/>
            <person name="Xu J."/>
            <person name="Wang Y."/>
            <person name="Yuan Z."/>
            <person name="Wen Y."/>
            <person name="Yao Z."/>
            <person name="Shen Y."/>
            <person name="Qiang B."/>
            <person name="Hou Y."/>
            <person name="Yu J."/>
            <person name="Jin Q."/>
        </authorList>
    </citation>
    <scope>NUCLEOTIDE SEQUENCE [LARGE SCALE GENOMIC DNA]</scope>
    <source>
        <strain>Sb227</strain>
    </source>
</reference>
<gene>
    <name evidence="1" type="primary">wzyE</name>
    <name type="ordered locus">SBO_3805</name>
</gene>
<name>WZYE_SHIBS</name>
<sequence>MSLLQFSGLFVVWLLCTLFIATLTWFEFRRVRFNFNVFFSLLFLLTFFFGFPLTSVLVFRFDVGVAPPEILLQALLSAGCFYAVYYVTYKTRLRKRVADVPRRPLFTMNRVETNLTWVILMGIALVSVGIFFMHNGFLLFRLNSYSQIFSSEVSGVALKRFFYFFIPAMLVVYFLRQDSKAWLFFLVSTVAFGLLTYMIVGGTRANIIIAFAIFLFIGIIRGWISLWMLAAAGVLGIVGMFWLALKRYGMNVSGDEAFYTFLYLTRDTFSPWENLALLLQNYDNIDFQGLAPIVRDFYVFIPSWLWPGRPSMVLNSANYFTREVLNNHSGLAISPTLIGSLVVMGGALFIPLGAIVVGLIIKWFDWLYELGNREPNRYKAAILHSFCFGAIFNMIVLAREGLDSFVSRVVFFIVVFGACLMIAKLLYWLFESAGLIHKRTKSSLRTQVEG</sequence>
<feature type="chain" id="PRO_1000062763" description="Probable ECA polymerase">
    <location>
        <begin position="1"/>
        <end position="450"/>
    </location>
</feature>
<feature type="transmembrane region" description="Helical" evidence="1">
    <location>
        <begin position="6"/>
        <end position="26"/>
    </location>
</feature>
<feature type="transmembrane region" description="Helical" evidence="1">
    <location>
        <begin position="37"/>
        <end position="57"/>
    </location>
</feature>
<feature type="transmembrane region" description="Helical" evidence="1">
    <location>
        <begin position="63"/>
        <end position="83"/>
    </location>
</feature>
<feature type="transmembrane region" description="Helical" evidence="1">
    <location>
        <begin position="118"/>
        <end position="138"/>
    </location>
</feature>
<feature type="transmembrane region" description="Helical" evidence="1">
    <location>
        <begin position="155"/>
        <end position="175"/>
    </location>
</feature>
<feature type="transmembrane region" description="Helical" evidence="1">
    <location>
        <begin position="181"/>
        <end position="201"/>
    </location>
</feature>
<feature type="transmembrane region" description="Helical" evidence="1">
    <location>
        <begin position="207"/>
        <end position="227"/>
    </location>
</feature>
<feature type="transmembrane region" description="Helical" evidence="1">
    <location>
        <begin position="228"/>
        <end position="248"/>
    </location>
</feature>
<feature type="transmembrane region" description="Helical" evidence="1">
    <location>
        <begin position="341"/>
        <end position="361"/>
    </location>
</feature>
<feature type="transmembrane region" description="Helical" evidence="1">
    <location>
        <begin position="378"/>
        <end position="398"/>
    </location>
</feature>
<feature type="transmembrane region" description="Helical" evidence="1">
    <location>
        <begin position="410"/>
        <end position="430"/>
    </location>
</feature>
<accession>Q31UJ0</accession>
<proteinExistence type="inferred from homology"/>
<organism>
    <name type="scientific">Shigella boydii serotype 4 (strain Sb227)</name>
    <dbReference type="NCBI Taxonomy" id="300268"/>
    <lineage>
        <taxon>Bacteria</taxon>
        <taxon>Pseudomonadati</taxon>
        <taxon>Pseudomonadota</taxon>
        <taxon>Gammaproteobacteria</taxon>
        <taxon>Enterobacterales</taxon>
        <taxon>Enterobacteriaceae</taxon>
        <taxon>Shigella</taxon>
    </lineage>
</organism>
<comment type="function">
    <text evidence="1">Probably involved in the polymerization of enterobacterial common antigen (ECA) trisaccharide repeat units.</text>
</comment>
<comment type="pathway">
    <text evidence="1">Bacterial outer membrane biogenesis; enterobacterial common antigen biosynthesis.</text>
</comment>
<comment type="subunit">
    <text evidence="1">Probably part of a complex composed of WzxE, WzyE and WzzE.</text>
</comment>
<comment type="subcellular location">
    <subcellularLocation>
        <location evidence="1">Cell inner membrane</location>
        <topology evidence="1">Multi-pass membrane protein</topology>
    </subcellularLocation>
</comment>
<comment type="similarity">
    <text evidence="1">Belongs to the WzyE family.</text>
</comment>
<evidence type="ECO:0000255" key="1">
    <source>
        <dbReference type="HAMAP-Rule" id="MF_01003"/>
    </source>
</evidence>